<protein>
    <recommendedName>
        <fullName evidence="10">Depolymerase 1, capsule K3-specific</fullName>
    </recommendedName>
    <alternativeName>
        <fullName evidence="9">Gene product 37</fullName>
        <shortName evidence="9">gp37</shortName>
    </alternativeName>
    <alternativeName>
        <fullName evidence="8">KP32gp37</fullName>
    </alternativeName>
    <alternativeName>
        <fullName evidence="10">Probable tail spike protein</fullName>
    </alternativeName>
    <component>
        <recommendedName>
            <fullName evidence="1">Mature depolymerase 1, capsule K3-specific</fullName>
        </recommendedName>
    </component>
    <component>
        <recommendedName>
            <fullName evidence="1">Intramolecular chaperone</fullName>
        </recommendedName>
    </component>
</protein>
<comment type="function">
    <text evidence="5 7 11">Functions as a receptor binding protein (RBP) and probably mediates the attachment to the host capsular exopolysaccharides (Probable). Displays a depolymerase activity that specifically degrades the K3-type polysaccharides of Klebsiella pneumoniae capsule, which allows the phage to reach the host cell membrane and bind the entry receptor (PubMed:30405575, PubMed:33947754).</text>
</comment>
<comment type="subunit">
    <text evidence="5 6">Homotrimer (PubMed:30405575). Interacts (via N-terminus) with depolymerase 2 (via N-terminus); this interaction probably gives rise to a branched tailspike (PubMed:32386574).</text>
</comment>
<comment type="subcellular location">
    <subcellularLocation>
        <location evidence="10">Virion</location>
    </subcellularLocation>
    <text evidence="9 10">Tail appendage (Probable). Depolymerase 1 is connected to the phage tail via an N-terminal anchor domain, while depolymerase 2 is attached to depolymerase 1 (PubMed:33947754).</text>
</comment>
<comment type="domain">
    <text evidence="9 10">The N-terminus anchors the RBP to the virion (PubMed:33947754). The central part and C-terminus probably binds and degrades the host exopolysaccharides (Probable). The C-terminus (Probable).</text>
</comment>
<comment type="PTM">
    <text evidence="2 3">Proteolytic cleavage and release of the chaperone in the host cytosol stabilizes the folded protein (By similarity). The cleavage gives rise to the mature tail spike protein but is not essential for catalytic activity (By similarity).</text>
</comment>
<comment type="similarity">
    <text evidence="10">In the N-terminal section; belongs to the Teseptimavirus fiber family.</text>
</comment>
<dbReference type="EMBL" id="GQ413937">
    <property type="protein sequence ID" value="ACY66699.1"/>
    <property type="molecule type" value="Genomic_DNA"/>
</dbReference>
<dbReference type="RefSeq" id="YP_003347555.1">
    <property type="nucleotide sequence ID" value="NC_013647.1"/>
</dbReference>
<dbReference type="SMR" id="D1L2X0"/>
<dbReference type="GeneID" id="8676101"/>
<dbReference type="KEGG" id="vg:8676101"/>
<dbReference type="OrthoDB" id="8468at10239"/>
<dbReference type="BRENDA" id="3.2.1.87">
    <property type="organism ID" value="16791"/>
</dbReference>
<dbReference type="Proteomes" id="UP000002632">
    <property type="component" value="Genome"/>
</dbReference>
<dbReference type="GO" id="GO:0098015">
    <property type="term" value="C:virus tail"/>
    <property type="evidence" value="ECO:0007669"/>
    <property type="project" value="UniProtKB-KW"/>
</dbReference>
<dbReference type="GO" id="GO:0008233">
    <property type="term" value="F:peptidase activity"/>
    <property type="evidence" value="ECO:0007669"/>
    <property type="project" value="UniProtKB-KW"/>
</dbReference>
<dbReference type="GO" id="GO:0098671">
    <property type="term" value="P:adhesion receptor-mediated virion attachment to host cell"/>
    <property type="evidence" value="ECO:0007669"/>
    <property type="project" value="UniProtKB-KW"/>
</dbReference>
<dbReference type="GO" id="GO:0006508">
    <property type="term" value="P:proteolysis"/>
    <property type="evidence" value="ECO:0007669"/>
    <property type="project" value="UniProtKB-KW"/>
</dbReference>
<dbReference type="GO" id="GO:0098994">
    <property type="term" value="P:symbiont entry into host cell via disruption of host cell envelope"/>
    <property type="evidence" value="ECO:0007669"/>
    <property type="project" value="UniProtKB-KW"/>
</dbReference>
<dbReference type="GO" id="GO:0098996">
    <property type="term" value="P:symbiont entry into host cell via disruption of host cell glycocalyx"/>
    <property type="evidence" value="ECO:0007669"/>
    <property type="project" value="UniProtKB-KW"/>
</dbReference>
<dbReference type="CDD" id="cd10144">
    <property type="entry name" value="Peptidase_S74_CIMCD"/>
    <property type="match status" value="1"/>
</dbReference>
<dbReference type="Gene3D" id="1.20.5.1240">
    <property type="entry name" value="Endo-n-acetylneuraminidase"/>
    <property type="match status" value="1"/>
</dbReference>
<dbReference type="Gene3D" id="4.10.1090.10">
    <property type="entry name" value="Endosialidase, domain 4"/>
    <property type="match status" value="1"/>
</dbReference>
<dbReference type="Gene3D" id="2.160.20.10">
    <property type="entry name" value="Single-stranded right-handed beta-helix, Pectin lyase-like"/>
    <property type="match status" value="1"/>
</dbReference>
<dbReference type="InterPro" id="IPR044914">
    <property type="entry name" value="Endosialidase_C_dom_sf"/>
</dbReference>
<dbReference type="InterPro" id="IPR012334">
    <property type="entry name" value="Pectin_lyas_fold"/>
</dbReference>
<dbReference type="InterPro" id="IPR011050">
    <property type="entry name" value="Pectin_lyase_fold/virulence"/>
</dbReference>
<dbReference type="InterPro" id="IPR005604">
    <property type="entry name" value="Phage_T7_tail_fibre-like_N"/>
</dbReference>
<dbReference type="InterPro" id="IPR030392">
    <property type="entry name" value="S74_ICA"/>
</dbReference>
<dbReference type="InterPro" id="IPR011049">
    <property type="entry name" value="Serralysin-like_metalloprot_C"/>
</dbReference>
<dbReference type="Pfam" id="PF13884">
    <property type="entry name" value="Peptidase_S74"/>
    <property type="match status" value="1"/>
</dbReference>
<dbReference type="Pfam" id="PF03906">
    <property type="entry name" value="Phage_T7_tail"/>
    <property type="match status" value="1"/>
</dbReference>
<dbReference type="SUPFAM" id="SSF101967">
    <property type="entry name" value="Adhesin YadA, collagen-binding domain"/>
    <property type="match status" value="1"/>
</dbReference>
<dbReference type="SUPFAM" id="SSF51126">
    <property type="entry name" value="Pectin lyase-like"/>
    <property type="match status" value="1"/>
</dbReference>
<dbReference type="PROSITE" id="PS51688">
    <property type="entry name" value="ICA"/>
    <property type="match status" value="1"/>
</dbReference>
<sequence length="869" mass="95352">MDQDIKTIIQYPTGATEFDIPFDYLSRKFVRVSLVSDDNRRLLRNITEYRYVSKTRVKILVDTTGFDRVEIRRFTSASERVVDFSDGSVLRANDLNVSQLQSSHIAEEARDSALLAMPEDDAGNLDARNRKIVRLAPGEVGTDAVNKDQLDTTLGEAGGILSEIKQTQQDIGDYIEEFANGTTYLKNIVMVYNQGSANGGETAIVLDRTDEVFAVPVIYINGDRQEVGFQFSYDNTTKTITLVKPLQRGDFVVMLTSEGTHSLASILAGPDGASRIGASGGLTVQQAIDRILESHIILPQWFGARGDWSDTTNTGTDDTAAFEAAIEMAVTLNYTEVYVPAGSYLITRELNLNGGNRNTRLGARIRGAGWASSVLVFKAPAPETPCISIIGTPGSHTSKGVEKLLIKSHPSTTGQGIGILCRNTCFAHVTEFLIANMNIGICLENYMTAGSFTEFCYFTNGRLFTNNINIQFNKVQNGDNSFHGSNFKNIQNQVKKNGGIGVQIVGNPQGAAYLYNMTWDMQFFGGAGCIAMDLNYCNTDYVGGKLTGESDLTFKADGNSRFDFHGRFDSIGKVIWDTATEGARTGGTYVFANRTSLENAVMTNADAGRLPAGVSARPLPADWADRNNNGVYPATFHIRGPNIESMGFVTYDSPGNGFFFGQLPFQGNIKDFNPRFWFNSGGTSFNTAATAYTMKLVNGEGLYFSDTTIRALSDGNVSLGEWNRRFKEARFTSWDIGTSIVPTSTATKDIGTNSNRIRDIYLANSPNVTSDSRKKSFIKPIDEALLDAWETIPFSQWKLNDSVAEKGSEARWHVGYIAQKVEESLQAFGLNAGDYGLITIGDDGFMLRMEECLVVEAAMIRRKLGLTYK</sequence>
<reference key="1">
    <citation type="submission" date="2009-07" db="EMBL/GenBank/DDBJ databases">
        <title>Genomic sequence and analysis of Klebsiella sp. KP32 bacteriophage.</title>
        <authorList>
            <person name="Drulis-Kawa Z."/>
            <person name="Maciaszczyk-Dziubinska E."/>
            <person name="Bocer T."/>
        </authorList>
    </citation>
    <scope>NUCLEOTIDE SEQUENCE [LARGE SCALE GENOMIC DNA]</scope>
</reference>
<reference key="2">
    <citation type="journal article" date="2018" name="Front. Microbiol.">
        <title>Phage-Borne Depolymerases Decrease Klebsiella pneumoniae Resistance to Innate Defense Mechanisms.</title>
        <authorList>
            <person name="Majkowska-Skrobek G."/>
            <person name="Latka A."/>
            <person name="Berisio R."/>
            <person name="Squeglia F."/>
            <person name="Maciejewska B."/>
            <person name="Briers Y."/>
            <person name="Drulis-Kawa Z."/>
        </authorList>
    </citation>
    <scope>FUNCTION</scope>
    <scope>SUBUNIT</scope>
</reference>
<reference key="3">
    <citation type="journal article" date="2021" name="MBio">
        <title>Engineering the Modular Receptor-Binding Proteins of Klebsiella Phages Switches Their Capsule Serotype Specificity.</title>
        <authorList>
            <person name="Latka A."/>
            <person name="Lemire S."/>
            <person name="Grimon D."/>
            <person name="Dams D."/>
            <person name="Maciejewska B."/>
            <person name="Lu T."/>
            <person name="Drulis-Kawa Z."/>
            <person name="Briers Y."/>
        </authorList>
    </citation>
    <scope>FUNCTION</scope>
    <scope>DOMAIN</scope>
</reference>
<reference key="4">
    <citation type="journal article" date="2020" name="Structure">
        <title>Structural and Functional Studies of a Klebsiella Phage Capsule Depolymerase Tailspike: Mechanistic Insights into Capsular Degradation.</title>
        <authorList>
            <person name="Squeglia F."/>
            <person name="Maciejewska B."/>
            <person name="Latka A."/>
            <person name="Ruggiero A."/>
            <person name="Briers Y."/>
            <person name="Drulis-Kawa Z."/>
            <person name="Berisio R."/>
        </authorList>
    </citation>
    <scope>INTERACTION WITH DEPOLYMERASE 2</scope>
</reference>
<reference key="5">
    <citation type="journal article" date="2019" name="Front. Microbiol.">
        <title>Modeling the Architecture of Depolymerase-Containing Receptor Binding Proteins in Klebsiella Phages.</title>
        <authorList>
            <person name="Latka A."/>
            <person name="Leiman P.G."/>
            <person name="Drulis-Kawa Z."/>
            <person name="Briers Y."/>
        </authorList>
    </citation>
    <scope>REVIEW</scope>
</reference>
<proteinExistence type="evidence at protein level"/>
<gene>
    <name evidence="12" type="primary">37</name>
</gene>
<organismHost>
    <name type="scientific">Klebsiella pneumoniae</name>
    <dbReference type="NCBI Taxonomy" id="573"/>
</organismHost>
<name>DPOL1_BPK32</name>
<feature type="chain" id="PRO_0000458707" description="Depolymerase 1, capsule K3-specific">
    <location>
        <begin position="1"/>
        <end position="869"/>
    </location>
</feature>
<feature type="chain" id="PRO_0000458708" description="Mature depolymerase 1, capsule K3-specific" evidence="10">
    <location>
        <begin position="1"/>
        <end position="770"/>
    </location>
</feature>
<feature type="chain" id="PRO_0000458709" description="Intramolecular chaperone" evidence="10">
    <location>
        <begin position="771"/>
        <end position="869"/>
    </location>
</feature>
<feature type="domain" description="Peptidase S74" evidence="4">
    <location>
        <begin position="770"/>
        <end position="869"/>
    </location>
</feature>
<feature type="site" description="Cleavage; by autolysis" evidence="1">
    <location>
        <begin position="770"/>
        <end position="771"/>
    </location>
</feature>
<evidence type="ECO:0000250" key="1">
    <source>
        <dbReference type="UniProtKB" id="O09496"/>
    </source>
</evidence>
<evidence type="ECO:0000250" key="2">
    <source>
        <dbReference type="UniProtKB" id="P49714"/>
    </source>
</evidence>
<evidence type="ECO:0000250" key="3">
    <source>
        <dbReference type="UniProtKB" id="Q04830"/>
    </source>
</evidence>
<evidence type="ECO:0000255" key="4">
    <source>
        <dbReference type="PROSITE-ProRule" id="PRU01025"/>
    </source>
</evidence>
<evidence type="ECO:0000269" key="5">
    <source>
    </source>
</evidence>
<evidence type="ECO:0000269" key="6">
    <source>
    </source>
</evidence>
<evidence type="ECO:0000269" key="7">
    <source>
    </source>
</evidence>
<evidence type="ECO:0000303" key="8">
    <source>
    </source>
</evidence>
<evidence type="ECO:0000303" key="9">
    <source>
    </source>
</evidence>
<evidence type="ECO:0000305" key="10"/>
<evidence type="ECO:0000305" key="11">
    <source>
    </source>
</evidence>
<evidence type="ECO:0000312" key="12">
    <source>
        <dbReference type="EMBL" id="ACY66699.1"/>
    </source>
</evidence>
<accession>D1L2X0</accession>
<organism>
    <name type="scientific">Klebsiella phage KP32</name>
    <name type="common">Bacteriophage KP32</name>
    <dbReference type="NCBI Taxonomy" id="674082"/>
    <lineage>
        <taxon>Viruses</taxon>
        <taxon>Duplodnaviria</taxon>
        <taxon>Heunggongvirae</taxon>
        <taxon>Uroviricota</taxon>
        <taxon>Caudoviricetes</taxon>
        <taxon>Autographiviridae</taxon>
        <taxon>Studiervirinae</taxon>
        <taxon>Przondovirus</taxon>
        <taxon>Przondovirus KP32</taxon>
    </lineage>
</organism>
<keyword id="KW-1238">Degradation of host capsule during virus entry</keyword>
<keyword id="KW-1235">Degradation of host cell envelope components during virus entry</keyword>
<keyword id="KW-0945">Host-virus interaction</keyword>
<keyword id="KW-0378">Hydrolase</keyword>
<keyword id="KW-0645">Protease</keyword>
<keyword id="KW-1185">Reference proteome</keyword>
<keyword id="KW-1233">Viral attachment to host adhesion receptor</keyword>
<keyword id="KW-1161">Viral attachment to host cell</keyword>
<keyword id="KW-1227">Viral tail protein</keyword>
<keyword id="KW-0946">Virion</keyword>
<keyword id="KW-1160">Virus entry into host cell</keyword>